<proteinExistence type="inferred from homology"/>
<feature type="chain" id="PRO_0000168393" description="L-lactate dehydrogenase">
    <location>
        <begin position="1"/>
        <end position="329"/>
    </location>
</feature>
<feature type="active site" description="Proton acceptor" evidence="1">
    <location>
        <position position="181"/>
    </location>
</feature>
<feature type="binding site" evidence="1">
    <location>
        <position position="18"/>
    </location>
    <ligand>
        <name>NAD(+)</name>
        <dbReference type="ChEBI" id="CHEBI:57540"/>
    </ligand>
</feature>
<feature type="binding site" evidence="1">
    <location>
        <position position="39"/>
    </location>
    <ligand>
        <name>NAD(+)</name>
        <dbReference type="ChEBI" id="CHEBI:57540"/>
    </ligand>
</feature>
<feature type="binding site" evidence="1">
    <location>
        <position position="46"/>
    </location>
    <ligand>
        <name>NAD(+)</name>
        <dbReference type="ChEBI" id="CHEBI:57540"/>
    </ligand>
</feature>
<feature type="binding site" evidence="1">
    <location>
        <position position="71"/>
    </location>
    <ligand>
        <name>NAD(+)</name>
        <dbReference type="ChEBI" id="CHEBI:57540"/>
    </ligand>
</feature>
<feature type="binding site" evidence="1">
    <location>
        <begin position="85"/>
        <end position="86"/>
    </location>
    <ligand>
        <name>NAD(+)</name>
        <dbReference type="ChEBI" id="CHEBI:57540"/>
    </ligand>
</feature>
<feature type="binding site" evidence="1">
    <location>
        <position position="88"/>
    </location>
    <ligand>
        <name>substrate</name>
    </ligand>
</feature>
<feature type="binding site" evidence="1">
    <location>
        <position position="94"/>
    </location>
    <ligand>
        <name>substrate</name>
    </ligand>
</feature>
<feature type="binding site" evidence="1">
    <location>
        <position position="107"/>
    </location>
    <ligand>
        <name>NAD(+)</name>
        <dbReference type="ChEBI" id="CHEBI:57540"/>
    </ligand>
</feature>
<feature type="binding site" evidence="1">
    <location>
        <begin position="124"/>
        <end position="126"/>
    </location>
    <ligand>
        <name>NAD(+)</name>
        <dbReference type="ChEBI" id="CHEBI:57540"/>
    </ligand>
</feature>
<feature type="binding site" evidence="1">
    <location>
        <begin position="126"/>
        <end position="129"/>
    </location>
    <ligand>
        <name>substrate</name>
    </ligand>
</feature>
<feature type="binding site" evidence="1">
    <location>
        <position position="149"/>
    </location>
    <ligand>
        <name>NAD(+)</name>
        <dbReference type="ChEBI" id="CHEBI:57540"/>
    </ligand>
</feature>
<feature type="binding site" evidence="1">
    <location>
        <begin position="154"/>
        <end position="157"/>
    </location>
    <ligand>
        <name>substrate</name>
    </ligand>
</feature>
<feature type="binding site" evidence="1">
    <location>
        <position position="159"/>
    </location>
    <ligand>
        <name>beta-D-fructose 1,6-bisphosphate</name>
        <dbReference type="ChEBI" id="CHEBI:32966"/>
        <note>allosteric activator</note>
    </ligand>
</feature>
<feature type="binding site" evidence="1">
    <location>
        <position position="174"/>
    </location>
    <ligand>
        <name>beta-D-fructose 1,6-bisphosphate</name>
        <dbReference type="ChEBI" id="CHEBI:32966"/>
        <note>allosteric activator</note>
    </ligand>
</feature>
<feature type="binding site" evidence="1">
    <location>
        <position position="235"/>
    </location>
    <ligand>
        <name>substrate</name>
    </ligand>
</feature>
<feature type="modified residue" description="Phosphotyrosine" evidence="1">
    <location>
        <position position="226"/>
    </location>
</feature>
<organism>
    <name type="scientific">Streptococcus agalactiae serotype III (strain NEM316)</name>
    <dbReference type="NCBI Taxonomy" id="211110"/>
    <lineage>
        <taxon>Bacteria</taxon>
        <taxon>Bacillati</taxon>
        <taxon>Bacillota</taxon>
        <taxon>Bacilli</taxon>
        <taxon>Lactobacillales</taxon>
        <taxon>Streptococcaceae</taxon>
        <taxon>Streptococcus</taxon>
    </lineage>
</organism>
<reference key="1">
    <citation type="journal article" date="2002" name="Mol. Microbiol.">
        <title>Genome sequence of Streptococcus agalactiae, a pathogen causing invasive neonatal disease.</title>
        <authorList>
            <person name="Glaser P."/>
            <person name="Rusniok C."/>
            <person name="Buchrieser C."/>
            <person name="Chevalier F."/>
            <person name="Frangeul L."/>
            <person name="Msadek T."/>
            <person name="Zouine M."/>
            <person name="Couve E."/>
            <person name="Lalioui L."/>
            <person name="Poyart C."/>
            <person name="Trieu-Cuot P."/>
            <person name="Kunst F."/>
        </authorList>
    </citation>
    <scope>NUCLEOTIDE SEQUENCE [LARGE SCALE GENOMIC DNA]</scope>
    <source>
        <strain>NEM316</strain>
    </source>
</reference>
<keyword id="KW-0021">Allosteric enzyme</keyword>
<keyword id="KW-0963">Cytoplasm</keyword>
<keyword id="KW-0520">NAD</keyword>
<keyword id="KW-0560">Oxidoreductase</keyword>
<keyword id="KW-0597">Phosphoprotein</keyword>
<dbReference type="EC" id="1.1.1.27" evidence="1"/>
<dbReference type="EMBL" id="AL766848">
    <property type="protein sequence ID" value="CAD46606.1"/>
    <property type="molecule type" value="Genomic_DNA"/>
</dbReference>
<dbReference type="RefSeq" id="WP_000127487.1">
    <property type="nucleotide sequence ID" value="NC_004368.1"/>
</dbReference>
<dbReference type="SMR" id="Q8E5N4"/>
<dbReference type="KEGG" id="san:gbs0947"/>
<dbReference type="eggNOG" id="COG0039">
    <property type="taxonomic scope" value="Bacteria"/>
</dbReference>
<dbReference type="HOGENOM" id="CLU_045401_1_1_9"/>
<dbReference type="UniPathway" id="UPA00554">
    <property type="reaction ID" value="UER00611"/>
</dbReference>
<dbReference type="Proteomes" id="UP000000823">
    <property type="component" value="Chromosome"/>
</dbReference>
<dbReference type="GO" id="GO:0005737">
    <property type="term" value="C:cytoplasm"/>
    <property type="evidence" value="ECO:0007669"/>
    <property type="project" value="UniProtKB-SubCell"/>
</dbReference>
<dbReference type="GO" id="GO:0004459">
    <property type="term" value="F:L-lactate dehydrogenase activity"/>
    <property type="evidence" value="ECO:0007669"/>
    <property type="project" value="UniProtKB-UniRule"/>
</dbReference>
<dbReference type="GO" id="GO:0006096">
    <property type="term" value="P:glycolytic process"/>
    <property type="evidence" value="ECO:0007669"/>
    <property type="project" value="UniProtKB-UniRule"/>
</dbReference>
<dbReference type="GO" id="GO:0006089">
    <property type="term" value="P:lactate metabolic process"/>
    <property type="evidence" value="ECO:0007669"/>
    <property type="project" value="TreeGrafter"/>
</dbReference>
<dbReference type="CDD" id="cd05291">
    <property type="entry name" value="HicDH_like"/>
    <property type="match status" value="1"/>
</dbReference>
<dbReference type="FunFam" id="3.40.50.720:FF:000018">
    <property type="entry name" value="Malate dehydrogenase"/>
    <property type="match status" value="1"/>
</dbReference>
<dbReference type="Gene3D" id="3.90.110.10">
    <property type="entry name" value="Lactate dehydrogenase/glycoside hydrolase, family 4, C-terminal"/>
    <property type="match status" value="1"/>
</dbReference>
<dbReference type="Gene3D" id="3.40.50.720">
    <property type="entry name" value="NAD(P)-binding Rossmann-like Domain"/>
    <property type="match status" value="1"/>
</dbReference>
<dbReference type="HAMAP" id="MF_00488">
    <property type="entry name" value="Lactate_dehydrog"/>
    <property type="match status" value="1"/>
</dbReference>
<dbReference type="InterPro" id="IPR001557">
    <property type="entry name" value="L-lactate/malate_DH"/>
</dbReference>
<dbReference type="InterPro" id="IPR011304">
    <property type="entry name" value="L-lactate_DH"/>
</dbReference>
<dbReference type="InterPro" id="IPR018177">
    <property type="entry name" value="L-lactate_DH_AS"/>
</dbReference>
<dbReference type="InterPro" id="IPR022383">
    <property type="entry name" value="Lactate/malate_DH_C"/>
</dbReference>
<dbReference type="InterPro" id="IPR001236">
    <property type="entry name" value="Lactate/malate_DH_N"/>
</dbReference>
<dbReference type="InterPro" id="IPR015955">
    <property type="entry name" value="Lactate_DH/Glyco_Ohase_4_C"/>
</dbReference>
<dbReference type="InterPro" id="IPR036291">
    <property type="entry name" value="NAD(P)-bd_dom_sf"/>
</dbReference>
<dbReference type="NCBIfam" id="TIGR01771">
    <property type="entry name" value="L-LDH-NAD"/>
    <property type="match status" value="1"/>
</dbReference>
<dbReference type="NCBIfam" id="NF000824">
    <property type="entry name" value="PRK00066.1"/>
    <property type="match status" value="1"/>
</dbReference>
<dbReference type="PANTHER" id="PTHR43128">
    <property type="entry name" value="L-2-HYDROXYCARBOXYLATE DEHYDROGENASE (NAD(P)(+))"/>
    <property type="match status" value="1"/>
</dbReference>
<dbReference type="PANTHER" id="PTHR43128:SF16">
    <property type="entry name" value="L-LACTATE DEHYDROGENASE"/>
    <property type="match status" value="1"/>
</dbReference>
<dbReference type="Pfam" id="PF02866">
    <property type="entry name" value="Ldh_1_C"/>
    <property type="match status" value="1"/>
</dbReference>
<dbReference type="Pfam" id="PF00056">
    <property type="entry name" value="Ldh_1_N"/>
    <property type="match status" value="1"/>
</dbReference>
<dbReference type="PIRSF" id="PIRSF000102">
    <property type="entry name" value="Lac_mal_DH"/>
    <property type="match status" value="1"/>
</dbReference>
<dbReference type="PRINTS" id="PR00086">
    <property type="entry name" value="LLDHDRGNASE"/>
</dbReference>
<dbReference type="SUPFAM" id="SSF56327">
    <property type="entry name" value="LDH C-terminal domain-like"/>
    <property type="match status" value="1"/>
</dbReference>
<dbReference type="SUPFAM" id="SSF51735">
    <property type="entry name" value="NAD(P)-binding Rossmann-fold domains"/>
    <property type="match status" value="1"/>
</dbReference>
<dbReference type="PROSITE" id="PS00064">
    <property type="entry name" value="L_LDH"/>
    <property type="match status" value="1"/>
</dbReference>
<gene>
    <name evidence="1" type="primary">ldh</name>
    <name type="ordered locus">gbs0947</name>
</gene>
<accession>Q8E5N4</accession>
<comment type="function">
    <text evidence="1">Catalyzes the conversion of lactate to pyruvate.</text>
</comment>
<comment type="catalytic activity">
    <reaction evidence="1">
        <text>(S)-lactate + NAD(+) = pyruvate + NADH + H(+)</text>
        <dbReference type="Rhea" id="RHEA:23444"/>
        <dbReference type="ChEBI" id="CHEBI:15361"/>
        <dbReference type="ChEBI" id="CHEBI:15378"/>
        <dbReference type="ChEBI" id="CHEBI:16651"/>
        <dbReference type="ChEBI" id="CHEBI:57540"/>
        <dbReference type="ChEBI" id="CHEBI:57945"/>
        <dbReference type="EC" id="1.1.1.27"/>
    </reaction>
</comment>
<comment type="activity regulation">
    <text evidence="1">Allosterically activated by fructose 1,6-bisphosphate (FBP).</text>
</comment>
<comment type="pathway">
    <text evidence="1">Fermentation; pyruvate fermentation to lactate; (S)-lactate from pyruvate: step 1/1.</text>
</comment>
<comment type="subunit">
    <text evidence="1">Homotetramer.</text>
</comment>
<comment type="subcellular location">
    <subcellularLocation>
        <location evidence="1">Cytoplasm</location>
    </subcellularLocation>
</comment>
<comment type="similarity">
    <text evidence="1">Belongs to the LDH/MDH superfamily. LDH family.</text>
</comment>
<name>LDH_STRA3</name>
<protein>
    <recommendedName>
        <fullName evidence="1">L-lactate dehydrogenase</fullName>
        <shortName evidence="1">L-LDH</shortName>
        <ecNumber evidence="1">1.1.1.27</ecNumber>
    </recommendedName>
</protein>
<sequence length="329" mass="35418">MTATKQHKKVILVGDGAVGSSYAFALVNQGIAQELGIIEIPALFDKAVGDAEDLSHALAFTSPKKIYAATYADCADADLVVITAGAPQKPGETRLDLVGKNLAINKSIVTQVVESGFNGIFLVAANPVDVLTYSTWKFSGFPKERVIGSGTSLDSARFRQALADKIGVDARSVHAYIMGEHGDSEFAVWSHANVAGVQLEQWLQENRDIDEQGLVDLFISVRDAAYSIINKKGATYYGIAVALARITKAILDDENAVLPLSVYQEGQYGDVKDVFIGQPAIVGAHGIVRPVNIPLNDAELQKMQASAEQLKDIIDEAWKNPEFQEASKN</sequence>
<evidence type="ECO:0000255" key="1">
    <source>
        <dbReference type="HAMAP-Rule" id="MF_00488"/>
    </source>
</evidence>